<accession>Q9JW67</accession>
<accession>A1IPX9</accession>
<name>SYGB_NEIMA</name>
<sequence length="687" mass="74651">MMTQTLLIELLTEELPPKALNNLGNHFAAAVAEGLEKAQLVDGAAEYTAYASPRRLAVQVKNVKAVQADQKIVKKGPAVANAVKDGAPTKALEGFARGAGAKIEDLTIVHDGKQDVYAYEYVQTGKLLGELLEDIINAAVKKLPIPKVMRWGSSTFTFVRPVHGLIVLHGGDIVNVSVLGLQSGNKTLGHRFLSDGEITIENADSYAEQMREQGKVVASFAERKAAIQTALEGQARRLNAAVAADEALLDEVTALVEWPVVLEAGFEEHFLAVPQECLILTMQQNQKYFPLLDQNGKLMNRFLLVSNLQTEDPSHIIQGNERVLRARLSDAEFFYKQDQKATLESRLPKLSGVVYHNKIGSQAERIERLQSIAAHIAKALGADAAAAERAARLAKADLVTEMVGEFPELQGTMGKYYARLDGETEEIAEAVEQHYQPRFAGDKLPESKIATAVALADKLETLVGIWGIGLIPTSDKDPYALRRSALGILRMLMQYGLDVNELIQTAFDSFPKGLLNEKTPSETADFMQARLAVLLQNDYPQDIVAAVLAKQPRRLDDVVAKLQAVASFKQLPEAAALAAANKRVQNLLKKADAELGVVNESLLQQDEEKALFAAAQGLQPKIAAAVAEGNFQTALSELASVKPQVDAFFDGVMVMAEDAAVKQNRLNLLNRLAEQMNAVADIALLGE</sequence>
<organism>
    <name type="scientific">Neisseria meningitidis serogroup A / serotype 4A (strain DSM 15465 / Z2491)</name>
    <dbReference type="NCBI Taxonomy" id="122587"/>
    <lineage>
        <taxon>Bacteria</taxon>
        <taxon>Pseudomonadati</taxon>
        <taxon>Pseudomonadota</taxon>
        <taxon>Betaproteobacteria</taxon>
        <taxon>Neisseriales</taxon>
        <taxon>Neisseriaceae</taxon>
        <taxon>Neisseria</taxon>
    </lineage>
</organism>
<gene>
    <name evidence="1" type="primary">glyS</name>
    <name type="ordered locus">NMA0523</name>
</gene>
<proteinExistence type="inferred from homology"/>
<feature type="chain" id="PRO_0000072915" description="Glycine--tRNA ligase beta subunit">
    <location>
        <begin position="1"/>
        <end position="687"/>
    </location>
</feature>
<protein>
    <recommendedName>
        <fullName evidence="1">Glycine--tRNA ligase beta subunit</fullName>
        <ecNumber evidence="1">6.1.1.14</ecNumber>
    </recommendedName>
    <alternativeName>
        <fullName evidence="1">Glycyl-tRNA synthetase beta subunit</fullName>
        <shortName evidence="1">GlyRS</shortName>
    </alternativeName>
</protein>
<comment type="catalytic activity">
    <reaction evidence="1">
        <text>tRNA(Gly) + glycine + ATP = glycyl-tRNA(Gly) + AMP + diphosphate</text>
        <dbReference type="Rhea" id="RHEA:16013"/>
        <dbReference type="Rhea" id="RHEA-COMP:9664"/>
        <dbReference type="Rhea" id="RHEA-COMP:9683"/>
        <dbReference type="ChEBI" id="CHEBI:30616"/>
        <dbReference type="ChEBI" id="CHEBI:33019"/>
        <dbReference type="ChEBI" id="CHEBI:57305"/>
        <dbReference type="ChEBI" id="CHEBI:78442"/>
        <dbReference type="ChEBI" id="CHEBI:78522"/>
        <dbReference type="ChEBI" id="CHEBI:456215"/>
        <dbReference type="EC" id="6.1.1.14"/>
    </reaction>
</comment>
<comment type="subunit">
    <text evidence="1">Tetramer of two alpha and two beta subunits.</text>
</comment>
<comment type="subcellular location">
    <subcellularLocation>
        <location evidence="1">Cytoplasm</location>
    </subcellularLocation>
</comment>
<comment type="similarity">
    <text evidence="1">Belongs to the class-II aminoacyl-tRNA synthetase family.</text>
</comment>
<reference key="1">
    <citation type="journal article" date="2000" name="Nature">
        <title>Complete DNA sequence of a serogroup A strain of Neisseria meningitidis Z2491.</title>
        <authorList>
            <person name="Parkhill J."/>
            <person name="Achtman M."/>
            <person name="James K.D."/>
            <person name="Bentley S.D."/>
            <person name="Churcher C.M."/>
            <person name="Klee S.R."/>
            <person name="Morelli G."/>
            <person name="Basham D."/>
            <person name="Brown D."/>
            <person name="Chillingworth T."/>
            <person name="Davies R.M."/>
            <person name="Davis P."/>
            <person name="Devlin K."/>
            <person name="Feltwell T."/>
            <person name="Hamlin N."/>
            <person name="Holroyd S."/>
            <person name="Jagels K."/>
            <person name="Leather S."/>
            <person name="Moule S."/>
            <person name="Mungall K.L."/>
            <person name="Quail M.A."/>
            <person name="Rajandream M.A."/>
            <person name="Rutherford K.M."/>
            <person name="Simmonds M."/>
            <person name="Skelton J."/>
            <person name="Whitehead S."/>
            <person name="Spratt B.G."/>
            <person name="Barrell B.G."/>
        </authorList>
    </citation>
    <scope>NUCLEOTIDE SEQUENCE [LARGE SCALE GENOMIC DNA]</scope>
    <source>
        <strain>DSM 15465 / Z2491</strain>
    </source>
</reference>
<evidence type="ECO:0000255" key="1">
    <source>
        <dbReference type="HAMAP-Rule" id="MF_00255"/>
    </source>
</evidence>
<keyword id="KW-0030">Aminoacyl-tRNA synthetase</keyword>
<keyword id="KW-0067">ATP-binding</keyword>
<keyword id="KW-0963">Cytoplasm</keyword>
<keyword id="KW-0436">Ligase</keyword>
<keyword id="KW-0547">Nucleotide-binding</keyword>
<keyword id="KW-0648">Protein biosynthesis</keyword>
<dbReference type="EC" id="6.1.1.14" evidence="1"/>
<dbReference type="EMBL" id="AL157959">
    <property type="protein sequence ID" value="CAM07800.1"/>
    <property type="molecule type" value="Genomic_DNA"/>
</dbReference>
<dbReference type="PIR" id="G81970">
    <property type="entry name" value="G81970"/>
</dbReference>
<dbReference type="RefSeq" id="WP_002247158.1">
    <property type="nucleotide sequence ID" value="NC_003116.1"/>
</dbReference>
<dbReference type="SMR" id="Q9JW67"/>
<dbReference type="EnsemblBacteria" id="CAM07800">
    <property type="protein sequence ID" value="CAM07800"/>
    <property type="gene ID" value="NMA0523"/>
</dbReference>
<dbReference type="GeneID" id="93386836"/>
<dbReference type="KEGG" id="nma:NMA0523"/>
<dbReference type="HOGENOM" id="CLU_007220_2_2_4"/>
<dbReference type="Proteomes" id="UP000000626">
    <property type="component" value="Chromosome"/>
</dbReference>
<dbReference type="GO" id="GO:0005829">
    <property type="term" value="C:cytosol"/>
    <property type="evidence" value="ECO:0007669"/>
    <property type="project" value="TreeGrafter"/>
</dbReference>
<dbReference type="GO" id="GO:0004814">
    <property type="term" value="F:arginine-tRNA ligase activity"/>
    <property type="evidence" value="ECO:0007669"/>
    <property type="project" value="InterPro"/>
</dbReference>
<dbReference type="GO" id="GO:0005524">
    <property type="term" value="F:ATP binding"/>
    <property type="evidence" value="ECO:0007669"/>
    <property type="project" value="UniProtKB-UniRule"/>
</dbReference>
<dbReference type="GO" id="GO:0004820">
    <property type="term" value="F:glycine-tRNA ligase activity"/>
    <property type="evidence" value="ECO:0007669"/>
    <property type="project" value="UniProtKB-UniRule"/>
</dbReference>
<dbReference type="GO" id="GO:0006420">
    <property type="term" value="P:arginyl-tRNA aminoacylation"/>
    <property type="evidence" value="ECO:0007669"/>
    <property type="project" value="InterPro"/>
</dbReference>
<dbReference type="GO" id="GO:0006426">
    <property type="term" value="P:glycyl-tRNA aminoacylation"/>
    <property type="evidence" value="ECO:0007669"/>
    <property type="project" value="UniProtKB-UniRule"/>
</dbReference>
<dbReference type="HAMAP" id="MF_00255">
    <property type="entry name" value="Gly_tRNA_synth_beta"/>
    <property type="match status" value="1"/>
</dbReference>
<dbReference type="InterPro" id="IPR008909">
    <property type="entry name" value="DALR_anticod-bd"/>
</dbReference>
<dbReference type="InterPro" id="IPR015944">
    <property type="entry name" value="Gly-tRNA-synth_bsu"/>
</dbReference>
<dbReference type="InterPro" id="IPR006194">
    <property type="entry name" value="Gly-tRNA-synth_heterodimer"/>
</dbReference>
<dbReference type="NCBIfam" id="TIGR00211">
    <property type="entry name" value="glyS"/>
    <property type="match status" value="1"/>
</dbReference>
<dbReference type="PANTHER" id="PTHR30075:SF2">
    <property type="entry name" value="GLYCINE--TRNA LIGASE, CHLOROPLASTIC_MITOCHONDRIAL 2"/>
    <property type="match status" value="1"/>
</dbReference>
<dbReference type="PANTHER" id="PTHR30075">
    <property type="entry name" value="GLYCYL-TRNA SYNTHETASE"/>
    <property type="match status" value="1"/>
</dbReference>
<dbReference type="Pfam" id="PF05746">
    <property type="entry name" value="DALR_1"/>
    <property type="match status" value="1"/>
</dbReference>
<dbReference type="Pfam" id="PF02092">
    <property type="entry name" value="tRNA_synt_2f"/>
    <property type="match status" value="1"/>
</dbReference>
<dbReference type="PRINTS" id="PR01045">
    <property type="entry name" value="TRNASYNTHGB"/>
</dbReference>
<dbReference type="SUPFAM" id="SSF109604">
    <property type="entry name" value="HD-domain/PDEase-like"/>
    <property type="match status" value="1"/>
</dbReference>
<dbReference type="PROSITE" id="PS50861">
    <property type="entry name" value="AA_TRNA_LIGASE_II_GLYAB"/>
    <property type="match status" value="1"/>
</dbReference>